<proteinExistence type="inferred from homology"/>
<gene>
    <name evidence="1" type="primary">argH</name>
    <name type="ordered locus">SAS0830</name>
</gene>
<dbReference type="EC" id="4.3.2.1" evidence="1"/>
<dbReference type="EMBL" id="BX571857">
    <property type="protein sequence ID" value="CAG42605.1"/>
    <property type="molecule type" value="Genomic_DNA"/>
</dbReference>
<dbReference type="RefSeq" id="WP_000066067.1">
    <property type="nucleotide sequence ID" value="NC_002953.3"/>
</dbReference>
<dbReference type="SMR" id="Q6GAW6"/>
<dbReference type="KEGG" id="sas:SAS0830"/>
<dbReference type="HOGENOM" id="CLU_027272_2_3_9"/>
<dbReference type="UniPathway" id="UPA00068">
    <property type="reaction ID" value="UER00114"/>
</dbReference>
<dbReference type="GO" id="GO:0005829">
    <property type="term" value="C:cytosol"/>
    <property type="evidence" value="ECO:0007669"/>
    <property type="project" value="TreeGrafter"/>
</dbReference>
<dbReference type="GO" id="GO:0004056">
    <property type="term" value="F:argininosuccinate lyase activity"/>
    <property type="evidence" value="ECO:0007669"/>
    <property type="project" value="UniProtKB-UniRule"/>
</dbReference>
<dbReference type="GO" id="GO:0042450">
    <property type="term" value="P:arginine biosynthetic process via ornithine"/>
    <property type="evidence" value="ECO:0007669"/>
    <property type="project" value="InterPro"/>
</dbReference>
<dbReference type="GO" id="GO:0006526">
    <property type="term" value="P:L-arginine biosynthetic process"/>
    <property type="evidence" value="ECO:0007669"/>
    <property type="project" value="UniProtKB-UniRule"/>
</dbReference>
<dbReference type="CDD" id="cd01359">
    <property type="entry name" value="Argininosuccinate_lyase"/>
    <property type="match status" value="1"/>
</dbReference>
<dbReference type="FunFam" id="1.10.275.10:FF:000002">
    <property type="entry name" value="Argininosuccinate lyase"/>
    <property type="match status" value="1"/>
</dbReference>
<dbReference type="FunFam" id="1.10.40.30:FF:000001">
    <property type="entry name" value="Argininosuccinate lyase"/>
    <property type="match status" value="1"/>
</dbReference>
<dbReference type="FunFam" id="1.20.200.10:FF:000006">
    <property type="entry name" value="Argininosuccinate lyase"/>
    <property type="match status" value="1"/>
</dbReference>
<dbReference type="Gene3D" id="1.10.40.30">
    <property type="entry name" value="Fumarase/aspartase (C-terminal domain)"/>
    <property type="match status" value="1"/>
</dbReference>
<dbReference type="Gene3D" id="1.20.200.10">
    <property type="entry name" value="Fumarase/aspartase (Central domain)"/>
    <property type="match status" value="1"/>
</dbReference>
<dbReference type="Gene3D" id="1.10.275.10">
    <property type="entry name" value="Fumarase/aspartase (N-terminal domain)"/>
    <property type="match status" value="1"/>
</dbReference>
<dbReference type="HAMAP" id="MF_00006">
    <property type="entry name" value="Arg_succ_lyase"/>
    <property type="match status" value="1"/>
</dbReference>
<dbReference type="InterPro" id="IPR029419">
    <property type="entry name" value="Arg_succ_lyase_C"/>
</dbReference>
<dbReference type="InterPro" id="IPR009049">
    <property type="entry name" value="Argininosuccinate_lyase"/>
</dbReference>
<dbReference type="InterPro" id="IPR024083">
    <property type="entry name" value="Fumarase/histidase_N"/>
</dbReference>
<dbReference type="InterPro" id="IPR020557">
    <property type="entry name" value="Fumarate_lyase_CS"/>
</dbReference>
<dbReference type="InterPro" id="IPR000362">
    <property type="entry name" value="Fumarate_lyase_fam"/>
</dbReference>
<dbReference type="InterPro" id="IPR022761">
    <property type="entry name" value="Fumarate_lyase_N"/>
</dbReference>
<dbReference type="InterPro" id="IPR008948">
    <property type="entry name" value="L-Aspartase-like"/>
</dbReference>
<dbReference type="NCBIfam" id="TIGR00838">
    <property type="entry name" value="argH"/>
    <property type="match status" value="1"/>
</dbReference>
<dbReference type="PANTHER" id="PTHR43814">
    <property type="entry name" value="ARGININOSUCCINATE LYASE"/>
    <property type="match status" value="1"/>
</dbReference>
<dbReference type="PANTHER" id="PTHR43814:SF1">
    <property type="entry name" value="ARGININOSUCCINATE LYASE"/>
    <property type="match status" value="1"/>
</dbReference>
<dbReference type="Pfam" id="PF14698">
    <property type="entry name" value="ASL_C2"/>
    <property type="match status" value="1"/>
</dbReference>
<dbReference type="Pfam" id="PF00206">
    <property type="entry name" value="Lyase_1"/>
    <property type="match status" value="1"/>
</dbReference>
<dbReference type="PRINTS" id="PR00145">
    <property type="entry name" value="ARGSUCLYASE"/>
</dbReference>
<dbReference type="PRINTS" id="PR00149">
    <property type="entry name" value="FUMRATELYASE"/>
</dbReference>
<dbReference type="SUPFAM" id="SSF48557">
    <property type="entry name" value="L-aspartase-like"/>
    <property type="match status" value="1"/>
</dbReference>
<dbReference type="PROSITE" id="PS00163">
    <property type="entry name" value="FUMARATE_LYASES"/>
    <property type="match status" value="1"/>
</dbReference>
<feature type="chain" id="PRO_0000137825" description="Argininosuccinate lyase">
    <location>
        <begin position="1"/>
        <end position="459"/>
    </location>
</feature>
<protein>
    <recommendedName>
        <fullName evidence="1">Argininosuccinate lyase</fullName>
        <shortName evidence="1">ASAL</shortName>
        <ecNumber evidence="1">4.3.2.1</ecNumber>
    </recommendedName>
    <alternativeName>
        <fullName evidence="1">Arginosuccinase</fullName>
    </alternativeName>
</protein>
<accession>Q6GAW6</accession>
<sequence>MSNKAWGGRFEVQPEEWVDDFNASITFDQTLINQDIEGSIAHATMLANQGIISQQDSEQIIQGLKSIQHDYHQDQIQFSASLEDIHLNIEHELIKRIGDAGGKLHTGRSRNDQVATDMHLYTKKQVQDIIALIKSLQSVIVDIASNNVDTIMPGYTHLQRAQPISFAHHIMTYFWMLQRDQQRFEDSLKRIDINPLGAAALSGTTYPIDRHETTALLNFGSLYENSLDAVSDRDYIIETLHNISLTMVHLSRFAEEIIFWSTDEAKFITLSDAFSTGSSIMPQKKNPDMAELIRGKVGRTTGHLMSMLMTLKGLPLAYNKDMQEDKEGLFDAVHTIKGSLRIFEGMIQTMTINKERLNQTVKEDFSNATELADYLVTKNIPFRTAHEIVGKIVLECIQQGHYLLDVPLATYQQHHSSIDADIYDYLQPENCLKRRQSYGSTGQSSVKQQLDVAKQLLSQ</sequence>
<keyword id="KW-0028">Amino-acid biosynthesis</keyword>
<keyword id="KW-0055">Arginine biosynthesis</keyword>
<keyword id="KW-0963">Cytoplasm</keyword>
<keyword id="KW-0456">Lyase</keyword>
<evidence type="ECO:0000255" key="1">
    <source>
        <dbReference type="HAMAP-Rule" id="MF_00006"/>
    </source>
</evidence>
<comment type="catalytic activity">
    <reaction evidence="1">
        <text>2-(N(omega)-L-arginino)succinate = fumarate + L-arginine</text>
        <dbReference type="Rhea" id="RHEA:24020"/>
        <dbReference type="ChEBI" id="CHEBI:29806"/>
        <dbReference type="ChEBI" id="CHEBI:32682"/>
        <dbReference type="ChEBI" id="CHEBI:57472"/>
        <dbReference type="EC" id="4.3.2.1"/>
    </reaction>
</comment>
<comment type="pathway">
    <text evidence="1">Amino-acid biosynthesis; L-arginine biosynthesis; L-arginine from L-ornithine and carbamoyl phosphate: step 3/3.</text>
</comment>
<comment type="subcellular location">
    <subcellularLocation>
        <location evidence="1">Cytoplasm</location>
    </subcellularLocation>
</comment>
<comment type="similarity">
    <text evidence="1">Belongs to the lyase 1 family. Argininosuccinate lyase subfamily.</text>
</comment>
<reference key="1">
    <citation type="journal article" date="2004" name="Proc. Natl. Acad. Sci. U.S.A.">
        <title>Complete genomes of two clinical Staphylococcus aureus strains: evidence for the rapid evolution of virulence and drug resistance.</title>
        <authorList>
            <person name="Holden M.T.G."/>
            <person name="Feil E.J."/>
            <person name="Lindsay J.A."/>
            <person name="Peacock S.J."/>
            <person name="Day N.P.J."/>
            <person name="Enright M.C."/>
            <person name="Foster T.J."/>
            <person name="Moore C.E."/>
            <person name="Hurst L."/>
            <person name="Atkin R."/>
            <person name="Barron A."/>
            <person name="Bason N."/>
            <person name="Bentley S.D."/>
            <person name="Chillingworth C."/>
            <person name="Chillingworth T."/>
            <person name="Churcher C."/>
            <person name="Clark L."/>
            <person name="Corton C."/>
            <person name="Cronin A."/>
            <person name="Doggett J."/>
            <person name="Dowd L."/>
            <person name="Feltwell T."/>
            <person name="Hance Z."/>
            <person name="Harris B."/>
            <person name="Hauser H."/>
            <person name="Holroyd S."/>
            <person name="Jagels K."/>
            <person name="James K.D."/>
            <person name="Lennard N."/>
            <person name="Line A."/>
            <person name="Mayes R."/>
            <person name="Moule S."/>
            <person name="Mungall K."/>
            <person name="Ormond D."/>
            <person name="Quail M.A."/>
            <person name="Rabbinowitsch E."/>
            <person name="Rutherford K.M."/>
            <person name="Sanders M."/>
            <person name="Sharp S."/>
            <person name="Simmonds M."/>
            <person name="Stevens K."/>
            <person name="Whitehead S."/>
            <person name="Barrell B.G."/>
            <person name="Spratt B.G."/>
            <person name="Parkhill J."/>
        </authorList>
    </citation>
    <scope>NUCLEOTIDE SEQUENCE [LARGE SCALE GENOMIC DNA]</scope>
    <source>
        <strain>MSSA476</strain>
    </source>
</reference>
<organism>
    <name type="scientific">Staphylococcus aureus (strain MSSA476)</name>
    <dbReference type="NCBI Taxonomy" id="282459"/>
    <lineage>
        <taxon>Bacteria</taxon>
        <taxon>Bacillati</taxon>
        <taxon>Bacillota</taxon>
        <taxon>Bacilli</taxon>
        <taxon>Bacillales</taxon>
        <taxon>Staphylococcaceae</taxon>
        <taxon>Staphylococcus</taxon>
    </lineage>
</organism>
<name>ARLY_STAAS</name>